<keyword id="KW-1003">Cell membrane</keyword>
<keyword id="KW-0472">Membrane</keyword>
<keyword id="KW-1185">Reference proteome</keyword>
<keyword id="KW-0812">Transmembrane</keyword>
<keyword id="KW-1133">Transmembrane helix</keyword>
<keyword id="KW-0813">Transport</keyword>
<feature type="chain" id="PRO_0000172512" description="46 kDa membrane protein">
    <location>
        <begin position="1"/>
        <end position="429"/>
    </location>
</feature>
<feature type="transmembrane region" description="Helical" evidence="1">
    <location>
        <begin position="26"/>
        <end position="46"/>
    </location>
</feature>
<feature type="transmembrane region" description="Helical" evidence="1">
    <location>
        <begin position="51"/>
        <end position="71"/>
    </location>
</feature>
<feature type="transmembrane region" description="Helical" evidence="1">
    <location>
        <begin position="99"/>
        <end position="119"/>
    </location>
</feature>
<feature type="transmembrane region" description="Helical" evidence="1">
    <location>
        <begin position="173"/>
        <end position="193"/>
    </location>
</feature>
<feature type="transmembrane region" description="Helical" evidence="1">
    <location>
        <begin position="224"/>
        <end position="244"/>
    </location>
</feature>
<feature type="transmembrane region" description="Helical" evidence="1">
    <location>
        <begin position="279"/>
        <end position="299"/>
    </location>
</feature>
<feature type="transmembrane region" description="Helical" evidence="1">
    <location>
        <begin position="315"/>
        <end position="335"/>
    </location>
</feature>
<feature type="transmembrane region" description="Helical" evidence="1">
    <location>
        <begin position="360"/>
        <end position="380"/>
    </location>
</feature>
<feature type="transmembrane region" description="Helical" evidence="1">
    <location>
        <begin position="407"/>
        <end position="427"/>
    </location>
</feature>
<feature type="sequence conflict" description="In Ref. 1; AAA99493." evidence="2" ref="1">
    <original>A</original>
    <variation>R</variation>
    <location>
        <position position="151"/>
    </location>
</feature>
<name>AG45_MYCLE</name>
<dbReference type="EMBL" id="L10660">
    <property type="protein sequence ID" value="AAA99493.1"/>
    <property type="molecule type" value="Unassigned_DNA"/>
</dbReference>
<dbReference type="EMBL" id="U15181">
    <property type="protein sequence ID" value="AAA62957.1"/>
    <property type="molecule type" value="Genomic_DNA"/>
</dbReference>
<dbReference type="EMBL" id="AL583920">
    <property type="protein sequence ID" value="CAC31417.1"/>
    <property type="molecule type" value="Genomic_DNA"/>
</dbReference>
<dbReference type="PIR" id="F87038">
    <property type="entry name" value="F87038"/>
</dbReference>
<dbReference type="RefSeq" id="NP_301764.1">
    <property type="nucleotide sequence ID" value="NC_002677.1"/>
</dbReference>
<dbReference type="RefSeq" id="WP_010908088.1">
    <property type="nucleotide sequence ID" value="NC_002677.1"/>
</dbReference>
<dbReference type="SMR" id="P46838"/>
<dbReference type="STRING" id="272631.gene:17574862"/>
<dbReference type="KEGG" id="mle:ML1036"/>
<dbReference type="PATRIC" id="fig|272631.5.peg.1867"/>
<dbReference type="Leproma" id="ML1036"/>
<dbReference type="eggNOG" id="COG1055">
    <property type="taxonomic scope" value="Bacteria"/>
</dbReference>
<dbReference type="HOGENOM" id="CLU_011920_4_0_11"/>
<dbReference type="OrthoDB" id="9809303at2"/>
<dbReference type="Proteomes" id="UP000000806">
    <property type="component" value="Chromosome"/>
</dbReference>
<dbReference type="GO" id="GO:0005886">
    <property type="term" value="C:plasma membrane"/>
    <property type="evidence" value="ECO:0007669"/>
    <property type="project" value="UniProtKB-SubCell"/>
</dbReference>
<dbReference type="GO" id="GO:0015105">
    <property type="term" value="F:arsenite transmembrane transporter activity"/>
    <property type="evidence" value="ECO:0007669"/>
    <property type="project" value="InterPro"/>
</dbReference>
<dbReference type="CDD" id="cd01116">
    <property type="entry name" value="P_permease"/>
    <property type="match status" value="1"/>
</dbReference>
<dbReference type="InterPro" id="IPR000802">
    <property type="entry name" value="Arsenical_pump_ArsB"/>
</dbReference>
<dbReference type="InterPro" id="IPR004680">
    <property type="entry name" value="Cit_transptr-like_dom"/>
</dbReference>
<dbReference type="InterPro" id="IPR051475">
    <property type="entry name" value="Diverse_Ion_Transporter"/>
</dbReference>
<dbReference type="PANTHER" id="PTHR43568">
    <property type="entry name" value="P PROTEIN"/>
    <property type="match status" value="1"/>
</dbReference>
<dbReference type="PANTHER" id="PTHR43568:SF1">
    <property type="entry name" value="P PROTEIN"/>
    <property type="match status" value="1"/>
</dbReference>
<dbReference type="Pfam" id="PF03600">
    <property type="entry name" value="CitMHS"/>
    <property type="match status" value="1"/>
</dbReference>
<dbReference type="PRINTS" id="PR00758">
    <property type="entry name" value="ARSENICPUMP"/>
</dbReference>
<proteinExistence type="inferred from homology"/>
<evidence type="ECO:0000255" key="1"/>
<evidence type="ECO:0000305" key="2"/>
<sequence length="429" mass="46109">MSVIAITVFIVTYALIASDRVNKTLAALTGAAIVVTLPIINSEDVFYSHETGIDWEVIFLLLSMMIIVSVLRQTGVFEYVAIWTAKRSHGSPLRILLLLVLVMALGSALLDNVTTVLLIAPVTLLVCERLTINAAPFLMAEVFASNIGGAATLVGDPPNIIIASRAGFSFNDFLIHLTPIVIIVTVVLSALLPRLFRGAFAVDPERVADIMSLNEREAIRDRWLLIKCGVVLLLVFVAFIAHPVLHTGPSLVGMLGAGILIVISKLERSDYLSSVKWETLLFFAGLFIMVGALVKTDVVNQLARATTTLTGGHELLTVVLTLGVSTLVSSIIDNIPYVATMTPIVSELVASMPDQSHTDILWWALALGADFGGNLTAVGASANVVMLEIAKSAGTPISFWEFTRKGIAVTVISIALAGIYLWLRYLVMS</sequence>
<reference key="1">
    <citation type="journal article" date="1995" name="Microbiology">
        <title>A 46 kDa integral membrane protein from Mycobacterium leprae resembles a number of bacterial and mammalian membrane transport proteins.</title>
        <authorList>
            <person name="Oskam L."/>
            <person name="Hartskeerl R.A."/>
            <person name="Hermans C.J."/>
            <person name="de Wit M.Y."/>
            <person name="Jarings G.H."/>
            <person name="Nicholls R.D."/>
            <person name="Klatser P.R."/>
        </authorList>
    </citation>
    <scope>NUCLEOTIDE SEQUENCE [GENOMIC DNA]</scope>
</reference>
<reference key="2">
    <citation type="submission" date="1994-09" db="EMBL/GenBank/DDBJ databases">
        <authorList>
            <person name="Smith D.R."/>
            <person name="Robison K."/>
        </authorList>
    </citation>
    <scope>NUCLEOTIDE SEQUENCE [GENOMIC DNA]</scope>
</reference>
<reference key="3">
    <citation type="journal article" date="2001" name="Nature">
        <title>Massive gene decay in the leprosy bacillus.</title>
        <authorList>
            <person name="Cole S.T."/>
            <person name="Eiglmeier K."/>
            <person name="Parkhill J."/>
            <person name="James K.D."/>
            <person name="Thomson N.R."/>
            <person name="Wheeler P.R."/>
            <person name="Honore N."/>
            <person name="Garnier T."/>
            <person name="Churcher C.M."/>
            <person name="Harris D.E."/>
            <person name="Mungall K.L."/>
            <person name="Basham D."/>
            <person name="Brown D."/>
            <person name="Chillingworth T."/>
            <person name="Connor R."/>
            <person name="Davies R.M."/>
            <person name="Devlin K."/>
            <person name="Duthoy S."/>
            <person name="Feltwell T."/>
            <person name="Fraser A."/>
            <person name="Hamlin N."/>
            <person name="Holroyd S."/>
            <person name="Hornsby T."/>
            <person name="Jagels K."/>
            <person name="Lacroix C."/>
            <person name="Maclean J."/>
            <person name="Moule S."/>
            <person name="Murphy L.D."/>
            <person name="Oliver K."/>
            <person name="Quail M.A."/>
            <person name="Rajandream M.A."/>
            <person name="Rutherford K.M."/>
            <person name="Rutter S."/>
            <person name="Seeger K."/>
            <person name="Simon S."/>
            <person name="Simmonds M."/>
            <person name="Skelton J."/>
            <person name="Squares R."/>
            <person name="Squares S."/>
            <person name="Stevens K."/>
            <person name="Taylor K."/>
            <person name="Whitehead S."/>
            <person name="Woodward J.R."/>
            <person name="Barrell B.G."/>
        </authorList>
    </citation>
    <scope>NUCLEOTIDE SEQUENCE [LARGE SCALE GENOMIC DNA]</scope>
    <source>
        <strain>TN</strain>
    </source>
</reference>
<protein>
    <recommendedName>
        <fullName>46 kDa membrane protein</fullName>
    </recommendedName>
</protein>
<comment type="subcellular location">
    <subcellularLocation>
        <location evidence="2">Cell membrane</location>
        <topology evidence="2">Multi-pass membrane protein</topology>
    </subcellularLocation>
</comment>
<comment type="similarity">
    <text evidence="2">Belongs to the CitM (TC 2.A.11) transporter family.</text>
</comment>
<accession>P46838</accession>
<gene>
    <name type="primary">ag45</name>
    <name type="ordered locus">ML1036</name>
</gene>
<organism>
    <name type="scientific">Mycobacterium leprae (strain TN)</name>
    <dbReference type="NCBI Taxonomy" id="272631"/>
    <lineage>
        <taxon>Bacteria</taxon>
        <taxon>Bacillati</taxon>
        <taxon>Actinomycetota</taxon>
        <taxon>Actinomycetes</taxon>
        <taxon>Mycobacteriales</taxon>
        <taxon>Mycobacteriaceae</taxon>
        <taxon>Mycobacterium</taxon>
    </lineage>
</organism>